<dbReference type="EC" id="2.3.2.6" evidence="1"/>
<dbReference type="EMBL" id="CP000447">
    <property type="protein sequence ID" value="ABI72097.1"/>
    <property type="molecule type" value="Genomic_DNA"/>
</dbReference>
<dbReference type="RefSeq" id="WP_011637707.1">
    <property type="nucleotide sequence ID" value="NC_008345.1"/>
</dbReference>
<dbReference type="SMR" id="Q081G8"/>
<dbReference type="STRING" id="318167.Sfri_2251"/>
<dbReference type="KEGG" id="sfr:Sfri_2251"/>
<dbReference type="eggNOG" id="COG2360">
    <property type="taxonomic scope" value="Bacteria"/>
</dbReference>
<dbReference type="HOGENOM" id="CLU_075045_0_0_6"/>
<dbReference type="OrthoDB" id="9790282at2"/>
<dbReference type="Proteomes" id="UP000000684">
    <property type="component" value="Chromosome"/>
</dbReference>
<dbReference type="GO" id="GO:0005737">
    <property type="term" value="C:cytoplasm"/>
    <property type="evidence" value="ECO:0007669"/>
    <property type="project" value="UniProtKB-SubCell"/>
</dbReference>
<dbReference type="GO" id="GO:0008914">
    <property type="term" value="F:leucyl-tRNA--protein transferase activity"/>
    <property type="evidence" value="ECO:0007669"/>
    <property type="project" value="UniProtKB-UniRule"/>
</dbReference>
<dbReference type="GO" id="GO:0030163">
    <property type="term" value="P:protein catabolic process"/>
    <property type="evidence" value="ECO:0007669"/>
    <property type="project" value="UniProtKB-UniRule"/>
</dbReference>
<dbReference type="FunFam" id="3.30.70.3550:FF:000001">
    <property type="entry name" value="Leucyl/phenylalanyl-tRNA--protein transferase"/>
    <property type="match status" value="1"/>
</dbReference>
<dbReference type="FunFam" id="3.40.630.70:FF:000001">
    <property type="entry name" value="Leucyl/phenylalanyl-tRNA--protein transferase"/>
    <property type="match status" value="1"/>
</dbReference>
<dbReference type="Gene3D" id="3.40.630.70">
    <property type="entry name" value="Leucyl/phenylalanyl-tRNA-protein transferase, C-terminal domain"/>
    <property type="match status" value="1"/>
</dbReference>
<dbReference type="Gene3D" id="3.30.70.3550">
    <property type="entry name" value="Leucyl/phenylalanyl-tRNA-protein transferase, N-terminal domain"/>
    <property type="match status" value="1"/>
</dbReference>
<dbReference type="HAMAP" id="MF_00688">
    <property type="entry name" value="Leu_Phe_trans"/>
    <property type="match status" value="1"/>
</dbReference>
<dbReference type="InterPro" id="IPR016181">
    <property type="entry name" value="Acyl_CoA_acyltransferase"/>
</dbReference>
<dbReference type="InterPro" id="IPR004616">
    <property type="entry name" value="Leu/Phe-tRNA_Trfase"/>
</dbReference>
<dbReference type="InterPro" id="IPR042203">
    <property type="entry name" value="Leu/Phe-tRNA_Trfase_C"/>
</dbReference>
<dbReference type="InterPro" id="IPR042221">
    <property type="entry name" value="Leu/Phe-tRNA_Trfase_N"/>
</dbReference>
<dbReference type="NCBIfam" id="TIGR00667">
    <property type="entry name" value="aat"/>
    <property type="match status" value="1"/>
</dbReference>
<dbReference type="PANTHER" id="PTHR30098">
    <property type="entry name" value="LEUCYL/PHENYLALANYL-TRNA--PROTEIN TRANSFERASE"/>
    <property type="match status" value="1"/>
</dbReference>
<dbReference type="PANTHER" id="PTHR30098:SF2">
    <property type="entry name" value="LEUCYL_PHENYLALANYL-TRNA--PROTEIN TRANSFERASE"/>
    <property type="match status" value="1"/>
</dbReference>
<dbReference type="Pfam" id="PF03588">
    <property type="entry name" value="Leu_Phe_trans"/>
    <property type="match status" value="1"/>
</dbReference>
<dbReference type="SUPFAM" id="SSF55729">
    <property type="entry name" value="Acyl-CoA N-acyltransferases (Nat)"/>
    <property type="match status" value="1"/>
</dbReference>
<evidence type="ECO:0000255" key="1">
    <source>
        <dbReference type="HAMAP-Rule" id="MF_00688"/>
    </source>
</evidence>
<gene>
    <name evidence="1" type="primary">aat</name>
    <name type="ordered locus">Sfri_2251</name>
</gene>
<keyword id="KW-0012">Acyltransferase</keyword>
<keyword id="KW-0963">Cytoplasm</keyword>
<keyword id="KW-1185">Reference proteome</keyword>
<keyword id="KW-0808">Transferase</keyword>
<accession>Q081G8</accession>
<proteinExistence type="inferred from homology"/>
<reference key="1">
    <citation type="submission" date="2006-08" db="EMBL/GenBank/DDBJ databases">
        <title>Complete sequence of Shewanella frigidimarina NCIMB 400.</title>
        <authorList>
            <consortium name="US DOE Joint Genome Institute"/>
            <person name="Copeland A."/>
            <person name="Lucas S."/>
            <person name="Lapidus A."/>
            <person name="Barry K."/>
            <person name="Detter J.C."/>
            <person name="Glavina del Rio T."/>
            <person name="Hammon N."/>
            <person name="Israni S."/>
            <person name="Dalin E."/>
            <person name="Tice H."/>
            <person name="Pitluck S."/>
            <person name="Fredrickson J.K."/>
            <person name="Kolker E."/>
            <person name="McCuel L.A."/>
            <person name="DiChristina T."/>
            <person name="Nealson K.H."/>
            <person name="Newman D."/>
            <person name="Tiedje J.M."/>
            <person name="Zhou J."/>
            <person name="Romine M.F."/>
            <person name="Culley D.E."/>
            <person name="Serres M."/>
            <person name="Chertkov O."/>
            <person name="Brettin T."/>
            <person name="Bruce D."/>
            <person name="Han C."/>
            <person name="Tapia R."/>
            <person name="Gilna P."/>
            <person name="Schmutz J."/>
            <person name="Larimer F."/>
            <person name="Land M."/>
            <person name="Hauser L."/>
            <person name="Kyrpides N."/>
            <person name="Mikhailova N."/>
            <person name="Richardson P."/>
        </authorList>
    </citation>
    <scope>NUCLEOTIDE SEQUENCE [LARGE SCALE GENOMIC DNA]</scope>
    <source>
        <strain>NCIMB 400</strain>
    </source>
</reference>
<comment type="function">
    <text evidence="1">Functions in the N-end rule pathway of protein degradation where it conjugates Leu, Phe and, less efficiently, Met from aminoacyl-tRNAs to the N-termini of proteins containing an N-terminal arginine or lysine.</text>
</comment>
<comment type="catalytic activity">
    <reaction evidence="1">
        <text>N-terminal L-lysyl-[protein] + L-leucyl-tRNA(Leu) = N-terminal L-leucyl-L-lysyl-[protein] + tRNA(Leu) + H(+)</text>
        <dbReference type="Rhea" id="RHEA:12340"/>
        <dbReference type="Rhea" id="RHEA-COMP:9613"/>
        <dbReference type="Rhea" id="RHEA-COMP:9622"/>
        <dbReference type="Rhea" id="RHEA-COMP:12670"/>
        <dbReference type="Rhea" id="RHEA-COMP:12671"/>
        <dbReference type="ChEBI" id="CHEBI:15378"/>
        <dbReference type="ChEBI" id="CHEBI:65249"/>
        <dbReference type="ChEBI" id="CHEBI:78442"/>
        <dbReference type="ChEBI" id="CHEBI:78494"/>
        <dbReference type="ChEBI" id="CHEBI:133043"/>
        <dbReference type="EC" id="2.3.2.6"/>
    </reaction>
</comment>
<comment type="catalytic activity">
    <reaction evidence="1">
        <text>N-terminal L-arginyl-[protein] + L-leucyl-tRNA(Leu) = N-terminal L-leucyl-L-arginyl-[protein] + tRNA(Leu) + H(+)</text>
        <dbReference type="Rhea" id="RHEA:50416"/>
        <dbReference type="Rhea" id="RHEA-COMP:9613"/>
        <dbReference type="Rhea" id="RHEA-COMP:9622"/>
        <dbReference type="Rhea" id="RHEA-COMP:12672"/>
        <dbReference type="Rhea" id="RHEA-COMP:12673"/>
        <dbReference type="ChEBI" id="CHEBI:15378"/>
        <dbReference type="ChEBI" id="CHEBI:64719"/>
        <dbReference type="ChEBI" id="CHEBI:78442"/>
        <dbReference type="ChEBI" id="CHEBI:78494"/>
        <dbReference type="ChEBI" id="CHEBI:133044"/>
        <dbReference type="EC" id="2.3.2.6"/>
    </reaction>
</comment>
<comment type="catalytic activity">
    <reaction evidence="1">
        <text>L-phenylalanyl-tRNA(Phe) + an N-terminal L-alpha-aminoacyl-[protein] = an N-terminal L-phenylalanyl-L-alpha-aminoacyl-[protein] + tRNA(Phe)</text>
        <dbReference type="Rhea" id="RHEA:43632"/>
        <dbReference type="Rhea" id="RHEA-COMP:9668"/>
        <dbReference type="Rhea" id="RHEA-COMP:9699"/>
        <dbReference type="Rhea" id="RHEA-COMP:10636"/>
        <dbReference type="Rhea" id="RHEA-COMP:10637"/>
        <dbReference type="ChEBI" id="CHEBI:78442"/>
        <dbReference type="ChEBI" id="CHEBI:78531"/>
        <dbReference type="ChEBI" id="CHEBI:78597"/>
        <dbReference type="ChEBI" id="CHEBI:83561"/>
        <dbReference type="EC" id="2.3.2.6"/>
    </reaction>
</comment>
<comment type="subcellular location">
    <subcellularLocation>
        <location evidence="1">Cytoplasm</location>
    </subcellularLocation>
</comment>
<comment type="similarity">
    <text evidence="1">Belongs to the L/F-transferase family.</text>
</comment>
<feature type="chain" id="PRO_0000304357" description="Leucyl/phenylalanyl-tRNA--protein transferase">
    <location>
        <begin position="1"/>
        <end position="235"/>
    </location>
</feature>
<sequence>MNSLSYLNQSIGFPPPEQALTDPNGLLAIGGDLRPDRLAQAYYQGIFPWFNANDPILWWSPDPRAVFTPSHPFGSKSLIKFLKKSAWRFTINQAFLDVVAGCAGPRNTQDGTWISAEIQMAYYELHLQGHAHSIEVWDGEQLVGGLYGIPVGGIFCGESMFHRQTNASKAAFAILNQHLVKHDFQLIDAQVMNPHLVSLGAKALPRSEFLTILHQYRDRATSASMWNKQEVFIEF</sequence>
<protein>
    <recommendedName>
        <fullName evidence="1">Leucyl/phenylalanyl-tRNA--protein transferase</fullName>
        <ecNumber evidence="1">2.3.2.6</ecNumber>
    </recommendedName>
    <alternativeName>
        <fullName evidence="1">L/F-transferase</fullName>
    </alternativeName>
    <alternativeName>
        <fullName evidence="1">Leucyltransferase</fullName>
    </alternativeName>
    <alternativeName>
        <fullName evidence="1">Phenyalanyltransferase</fullName>
    </alternativeName>
</protein>
<organism>
    <name type="scientific">Shewanella frigidimarina (strain NCIMB 400)</name>
    <dbReference type="NCBI Taxonomy" id="318167"/>
    <lineage>
        <taxon>Bacteria</taxon>
        <taxon>Pseudomonadati</taxon>
        <taxon>Pseudomonadota</taxon>
        <taxon>Gammaproteobacteria</taxon>
        <taxon>Alteromonadales</taxon>
        <taxon>Shewanellaceae</taxon>
        <taxon>Shewanella</taxon>
    </lineage>
</organism>
<name>LFTR_SHEFN</name>